<gene>
    <name evidence="1" type="primary">kdpB</name>
    <name type="ordered locus">Ta1309</name>
</gene>
<feature type="chain" id="PRO_0000046152" description="Potassium-transporting ATPase ATP-binding subunit">
    <location>
        <begin position="1"/>
        <end position="665"/>
    </location>
</feature>
<feature type="transmembrane region" description="Helical" evidence="1">
    <location>
        <begin position="28"/>
        <end position="48"/>
    </location>
</feature>
<feature type="transmembrane region" description="Helical" evidence="1">
    <location>
        <begin position="56"/>
        <end position="76"/>
    </location>
</feature>
<feature type="transmembrane region" description="Helical" evidence="1">
    <location>
        <begin position="207"/>
        <end position="227"/>
    </location>
</feature>
<feature type="transmembrane region" description="Helical" evidence="1">
    <location>
        <begin position="244"/>
        <end position="264"/>
    </location>
</feature>
<feature type="transmembrane region" description="Helical" evidence="1">
    <location>
        <begin position="570"/>
        <end position="590"/>
    </location>
</feature>
<feature type="transmembrane region" description="Helical" evidence="1">
    <location>
        <begin position="596"/>
        <end position="616"/>
    </location>
</feature>
<feature type="transmembrane region" description="Helical" evidence="1">
    <location>
        <begin position="644"/>
        <end position="664"/>
    </location>
</feature>
<feature type="active site" description="4-aspartylphosphate intermediate" evidence="1">
    <location>
        <position position="295"/>
    </location>
</feature>
<feature type="binding site" evidence="1">
    <location>
        <position position="332"/>
    </location>
    <ligand>
        <name>ATP</name>
        <dbReference type="ChEBI" id="CHEBI:30616"/>
    </ligand>
</feature>
<feature type="binding site" evidence="1">
    <location>
        <position position="336"/>
    </location>
    <ligand>
        <name>ATP</name>
        <dbReference type="ChEBI" id="CHEBI:30616"/>
    </ligand>
</feature>
<feature type="binding site" evidence="1">
    <location>
        <begin position="364"/>
        <end position="371"/>
    </location>
    <ligand>
        <name>ATP</name>
        <dbReference type="ChEBI" id="CHEBI:30616"/>
    </ligand>
</feature>
<feature type="binding site" evidence="1">
    <location>
        <position position="382"/>
    </location>
    <ligand>
        <name>ATP</name>
        <dbReference type="ChEBI" id="CHEBI:30616"/>
    </ligand>
</feature>
<feature type="binding site" evidence="1">
    <location>
        <position position="501"/>
    </location>
    <ligand>
        <name>Mg(2+)</name>
        <dbReference type="ChEBI" id="CHEBI:18420"/>
    </ligand>
</feature>
<feature type="binding site" evidence="1">
    <location>
        <position position="505"/>
    </location>
    <ligand>
        <name>Mg(2+)</name>
        <dbReference type="ChEBI" id="CHEBI:18420"/>
    </ligand>
</feature>
<proteinExistence type="inferred from homology"/>
<accession>P57700</accession>
<dbReference type="EC" id="7.2.2.6" evidence="1"/>
<dbReference type="EMBL" id="AL445067">
    <property type="protein sequence ID" value="CAC12430.1"/>
    <property type="molecule type" value="Genomic_DNA"/>
</dbReference>
<dbReference type="SMR" id="P57700"/>
<dbReference type="STRING" id="273075.gene:9572532"/>
<dbReference type="PaxDb" id="273075-Ta1309"/>
<dbReference type="EnsemblBacteria" id="CAC12430">
    <property type="protein sequence ID" value="CAC12430"/>
    <property type="gene ID" value="CAC12430"/>
</dbReference>
<dbReference type="KEGG" id="tac:Ta1309"/>
<dbReference type="eggNOG" id="arCOG01577">
    <property type="taxonomic scope" value="Archaea"/>
</dbReference>
<dbReference type="HOGENOM" id="CLU_025728_2_0_2"/>
<dbReference type="InParanoid" id="P57700"/>
<dbReference type="OrthoDB" id="8588at2157"/>
<dbReference type="BRENDA" id="7.2.2.6">
    <property type="organism ID" value="6324"/>
</dbReference>
<dbReference type="Proteomes" id="UP000001024">
    <property type="component" value="Chromosome"/>
</dbReference>
<dbReference type="GO" id="GO:0005886">
    <property type="term" value="C:plasma membrane"/>
    <property type="evidence" value="ECO:0007669"/>
    <property type="project" value="UniProtKB-SubCell"/>
</dbReference>
<dbReference type="GO" id="GO:0005524">
    <property type="term" value="F:ATP binding"/>
    <property type="evidence" value="ECO:0007669"/>
    <property type="project" value="UniProtKB-UniRule"/>
</dbReference>
<dbReference type="GO" id="GO:0016887">
    <property type="term" value="F:ATP hydrolysis activity"/>
    <property type="evidence" value="ECO:0007669"/>
    <property type="project" value="InterPro"/>
</dbReference>
<dbReference type="GO" id="GO:0000287">
    <property type="term" value="F:magnesium ion binding"/>
    <property type="evidence" value="ECO:0007669"/>
    <property type="project" value="UniProtKB-UniRule"/>
</dbReference>
<dbReference type="GO" id="GO:0008556">
    <property type="term" value="F:P-type potassium transmembrane transporter activity"/>
    <property type="evidence" value="ECO:0007669"/>
    <property type="project" value="UniProtKB-UniRule"/>
</dbReference>
<dbReference type="Gene3D" id="3.40.1110.10">
    <property type="entry name" value="Calcium-transporting ATPase, cytoplasmic domain N"/>
    <property type="match status" value="1"/>
</dbReference>
<dbReference type="Gene3D" id="2.70.150.10">
    <property type="entry name" value="Calcium-transporting ATPase, cytoplasmic transduction domain A"/>
    <property type="match status" value="1"/>
</dbReference>
<dbReference type="Gene3D" id="3.40.50.1000">
    <property type="entry name" value="HAD superfamily/HAD-like"/>
    <property type="match status" value="1"/>
</dbReference>
<dbReference type="HAMAP" id="MF_00285">
    <property type="entry name" value="KdpB"/>
    <property type="match status" value="1"/>
</dbReference>
<dbReference type="InterPro" id="IPR023299">
    <property type="entry name" value="ATPase_P-typ_cyto_dom_N"/>
</dbReference>
<dbReference type="InterPro" id="IPR018303">
    <property type="entry name" value="ATPase_P-typ_P_site"/>
</dbReference>
<dbReference type="InterPro" id="IPR023298">
    <property type="entry name" value="ATPase_P-typ_TM_dom_sf"/>
</dbReference>
<dbReference type="InterPro" id="IPR008250">
    <property type="entry name" value="ATPase_P-typ_transduc_dom_A_sf"/>
</dbReference>
<dbReference type="InterPro" id="IPR036412">
    <property type="entry name" value="HAD-like_sf"/>
</dbReference>
<dbReference type="InterPro" id="IPR023214">
    <property type="entry name" value="HAD_sf"/>
</dbReference>
<dbReference type="InterPro" id="IPR006391">
    <property type="entry name" value="P-type_ATPase_bsu_IA"/>
</dbReference>
<dbReference type="InterPro" id="IPR001757">
    <property type="entry name" value="P_typ_ATPase"/>
</dbReference>
<dbReference type="InterPro" id="IPR044492">
    <property type="entry name" value="P_typ_ATPase_HD_dom"/>
</dbReference>
<dbReference type="NCBIfam" id="TIGR01494">
    <property type="entry name" value="ATPase_P-type"/>
    <property type="match status" value="2"/>
</dbReference>
<dbReference type="NCBIfam" id="TIGR01497">
    <property type="entry name" value="kdpB"/>
    <property type="match status" value="1"/>
</dbReference>
<dbReference type="PANTHER" id="PTHR43743">
    <property type="entry name" value="POTASSIUM-TRANSPORTING ATPASE ATP-BINDING SUBUNIT"/>
    <property type="match status" value="1"/>
</dbReference>
<dbReference type="PANTHER" id="PTHR43743:SF1">
    <property type="entry name" value="POTASSIUM-TRANSPORTING ATPASE ATP-BINDING SUBUNIT"/>
    <property type="match status" value="1"/>
</dbReference>
<dbReference type="Pfam" id="PF00122">
    <property type="entry name" value="E1-E2_ATPase"/>
    <property type="match status" value="1"/>
</dbReference>
<dbReference type="Pfam" id="PF00702">
    <property type="entry name" value="Hydrolase"/>
    <property type="match status" value="1"/>
</dbReference>
<dbReference type="PRINTS" id="PR00119">
    <property type="entry name" value="CATATPASE"/>
</dbReference>
<dbReference type="SFLD" id="SFLDG00002">
    <property type="entry name" value="C1.7:_P-type_atpase_like"/>
    <property type="match status" value="1"/>
</dbReference>
<dbReference type="SFLD" id="SFLDF00027">
    <property type="entry name" value="p-type_atpase"/>
    <property type="match status" value="1"/>
</dbReference>
<dbReference type="SUPFAM" id="SSF81653">
    <property type="entry name" value="Calcium ATPase, transduction domain A"/>
    <property type="match status" value="1"/>
</dbReference>
<dbReference type="SUPFAM" id="SSF81665">
    <property type="entry name" value="Calcium ATPase, transmembrane domain M"/>
    <property type="match status" value="1"/>
</dbReference>
<dbReference type="SUPFAM" id="SSF56784">
    <property type="entry name" value="HAD-like"/>
    <property type="match status" value="1"/>
</dbReference>
<dbReference type="PROSITE" id="PS00154">
    <property type="entry name" value="ATPASE_E1_E2"/>
    <property type="match status" value="1"/>
</dbReference>
<name>KDPB_THEAC</name>
<organism>
    <name type="scientific">Thermoplasma acidophilum (strain ATCC 25905 / DSM 1728 / JCM 9062 / NBRC 15155 / AMRC-C165)</name>
    <dbReference type="NCBI Taxonomy" id="273075"/>
    <lineage>
        <taxon>Archaea</taxon>
        <taxon>Methanobacteriati</taxon>
        <taxon>Thermoplasmatota</taxon>
        <taxon>Thermoplasmata</taxon>
        <taxon>Thermoplasmatales</taxon>
        <taxon>Thermoplasmataceae</taxon>
        <taxon>Thermoplasma</taxon>
    </lineage>
</organism>
<reference key="1">
    <citation type="journal article" date="2000" name="Nature">
        <title>The genome sequence of the thermoacidophilic scavenger Thermoplasma acidophilum.</title>
        <authorList>
            <person name="Ruepp A."/>
            <person name="Graml W."/>
            <person name="Santos-Martinez M.-L."/>
            <person name="Koretke K.K."/>
            <person name="Volker C."/>
            <person name="Mewes H.-W."/>
            <person name="Frishman D."/>
            <person name="Stocker S."/>
            <person name="Lupas A.N."/>
            <person name="Baumeister W."/>
        </authorList>
    </citation>
    <scope>NUCLEOTIDE SEQUENCE [LARGE SCALE GENOMIC DNA]</scope>
    <source>
        <strain>ATCC 25905 / DSM 1728 / JCM 9062 / NBRC 15155 / AMRC-C165</strain>
    </source>
</reference>
<sequence>MNFMKVYEEFLLTLKNMRPDVIIHNPVMFLTEMSLFLSVFIYAFPGFFGVPSSTTYLQFYLAVVILLFLTVFFSSMSTAMSEGKSKAITDSLKKFKTEVTAHVIRDGNPVDVKSTDLRKGDIIVVYRDEIIPIDGEVIEGSGYVDESNVTGESRAVMKVIGDTVTGSTRLVTDKIKIRATADPGSTFIDKMIDLVNRATREKTPNEIALTVFLSGLTLIFLIITASIFSISHYYGRTANVMMLIVLLIALIPTTIGALLPAIGIAAINKVSEYNIIAKSGRAIENAGDIDTIILDKTGTITIGERQAVRMYPNKGVDDKEFYRMCALASFYDQTKEGISILNLARSNGITVSEEDLRGYSFIPFSSETKYSGLESDSDYIIKGSLHALKEKFHVADEFIEALCKEISMRGGTAIPVVHNGKFAGVIELQDLIKPGIKERIAEIKNMDIKTVMCTGDDEVTAQYISAQVGLDEYIANSKPIDKYNVVIREKERQRMVAMVGDGTNDAPALAKADVGLAMNNGTQAAKEAANMIDLDSNPTKLMDVIFLGKQILITRGALTTFSIANDISKYFVIIPAIFYMFPSLSMVNVLDLTDPIVAVTSALIFNTIIIVFLIPLALGGVKYKPTSISDLLKRNIMIYGLGGVVVPFIAIKLIYMLLVALGVVW</sequence>
<comment type="function">
    <text evidence="1">Part of the high-affinity ATP-driven potassium transport (or Kdp) system, which catalyzes the hydrolysis of ATP coupled with the electrogenic transport of potassium into the cytoplasm. This subunit is responsible for energy coupling to the transport system and for the release of the potassium ions to the cytoplasm.</text>
</comment>
<comment type="catalytic activity">
    <reaction evidence="1">
        <text>K(+)(out) + ATP + H2O = K(+)(in) + ADP + phosphate + H(+)</text>
        <dbReference type="Rhea" id="RHEA:16777"/>
        <dbReference type="ChEBI" id="CHEBI:15377"/>
        <dbReference type="ChEBI" id="CHEBI:15378"/>
        <dbReference type="ChEBI" id="CHEBI:29103"/>
        <dbReference type="ChEBI" id="CHEBI:30616"/>
        <dbReference type="ChEBI" id="CHEBI:43474"/>
        <dbReference type="ChEBI" id="CHEBI:456216"/>
        <dbReference type="EC" id="7.2.2.6"/>
    </reaction>
    <physiologicalReaction direction="left-to-right" evidence="1">
        <dbReference type="Rhea" id="RHEA:16778"/>
    </physiologicalReaction>
</comment>
<comment type="subunit">
    <text evidence="1">The system is composed of three essential subunits: KdpA, KdpB and KdpC.</text>
</comment>
<comment type="subcellular location">
    <subcellularLocation>
        <location evidence="1">Cell membrane</location>
        <topology evidence="1">Multi-pass membrane protein</topology>
    </subcellularLocation>
</comment>
<comment type="similarity">
    <text evidence="1">Belongs to the cation transport ATPase (P-type) (TC 3.A.3) family. Type IA subfamily.</text>
</comment>
<evidence type="ECO:0000255" key="1">
    <source>
        <dbReference type="HAMAP-Rule" id="MF_00285"/>
    </source>
</evidence>
<protein>
    <recommendedName>
        <fullName evidence="1">Potassium-transporting ATPase ATP-binding subunit</fullName>
        <ecNumber evidence="1">7.2.2.6</ecNumber>
    </recommendedName>
    <alternativeName>
        <fullName evidence="1">ATP phosphohydrolase [potassium-transporting] B chain</fullName>
    </alternativeName>
    <alternativeName>
        <fullName evidence="1">Potassium-binding and translocating subunit B</fullName>
    </alternativeName>
    <alternativeName>
        <fullName evidence="1">Potassium-translocating ATPase B chain</fullName>
    </alternativeName>
</protein>
<keyword id="KW-0067">ATP-binding</keyword>
<keyword id="KW-1003">Cell membrane</keyword>
<keyword id="KW-0406">Ion transport</keyword>
<keyword id="KW-0460">Magnesium</keyword>
<keyword id="KW-0472">Membrane</keyword>
<keyword id="KW-0479">Metal-binding</keyword>
<keyword id="KW-0547">Nucleotide-binding</keyword>
<keyword id="KW-0597">Phosphoprotein</keyword>
<keyword id="KW-0630">Potassium</keyword>
<keyword id="KW-0633">Potassium transport</keyword>
<keyword id="KW-1185">Reference proteome</keyword>
<keyword id="KW-1278">Translocase</keyword>
<keyword id="KW-0812">Transmembrane</keyword>
<keyword id="KW-1133">Transmembrane helix</keyword>
<keyword id="KW-0813">Transport</keyword>